<dbReference type="EC" id="3.6.5.4" evidence="1"/>
<dbReference type="EMBL" id="CP000682">
    <property type="protein sequence ID" value="ABP95912.1"/>
    <property type="molecule type" value="Genomic_DNA"/>
</dbReference>
<dbReference type="RefSeq" id="WP_012021699.1">
    <property type="nucleotide sequence ID" value="NC_009440.1"/>
</dbReference>
<dbReference type="SMR" id="A4YHL0"/>
<dbReference type="STRING" id="399549.Msed_1757"/>
<dbReference type="GeneID" id="91756269"/>
<dbReference type="KEGG" id="mse:Msed_1757"/>
<dbReference type="eggNOG" id="arCOG01228">
    <property type="taxonomic scope" value="Archaea"/>
</dbReference>
<dbReference type="HOGENOM" id="CLU_009301_6_0_2"/>
<dbReference type="Proteomes" id="UP000000242">
    <property type="component" value="Chromosome"/>
</dbReference>
<dbReference type="GO" id="GO:0048500">
    <property type="term" value="C:signal recognition particle"/>
    <property type="evidence" value="ECO:0007669"/>
    <property type="project" value="UniProtKB-UniRule"/>
</dbReference>
<dbReference type="GO" id="GO:0008312">
    <property type="term" value="F:7S RNA binding"/>
    <property type="evidence" value="ECO:0007669"/>
    <property type="project" value="UniProtKB-UniRule"/>
</dbReference>
<dbReference type="GO" id="GO:0016887">
    <property type="term" value="F:ATP hydrolysis activity"/>
    <property type="evidence" value="ECO:0007669"/>
    <property type="project" value="InterPro"/>
</dbReference>
<dbReference type="GO" id="GO:0005525">
    <property type="term" value="F:GTP binding"/>
    <property type="evidence" value="ECO:0007669"/>
    <property type="project" value="UniProtKB-UniRule"/>
</dbReference>
<dbReference type="GO" id="GO:0003924">
    <property type="term" value="F:GTPase activity"/>
    <property type="evidence" value="ECO:0007669"/>
    <property type="project" value="UniProtKB-UniRule"/>
</dbReference>
<dbReference type="GO" id="GO:0006614">
    <property type="term" value="P:SRP-dependent cotranslational protein targeting to membrane"/>
    <property type="evidence" value="ECO:0007669"/>
    <property type="project" value="InterPro"/>
</dbReference>
<dbReference type="CDD" id="cd17875">
    <property type="entry name" value="SRP54_G"/>
    <property type="match status" value="1"/>
</dbReference>
<dbReference type="FunFam" id="3.40.50.300:FF:000022">
    <property type="entry name" value="Signal recognition particle 54 kDa subunit"/>
    <property type="match status" value="1"/>
</dbReference>
<dbReference type="Gene3D" id="3.40.50.300">
    <property type="entry name" value="P-loop containing nucleotide triphosphate hydrolases"/>
    <property type="match status" value="1"/>
</dbReference>
<dbReference type="Gene3D" id="1.20.120.140">
    <property type="entry name" value="Signal recognition particle SRP54, nucleotide-binding domain"/>
    <property type="match status" value="1"/>
</dbReference>
<dbReference type="Gene3D" id="1.10.260.30">
    <property type="entry name" value="Signal recognition particle, SRP54 subunit, M-domain"/>
    <property type="match status" value="1"/>
</dbReference>
<dbReference type="HAMAP" id="MF_00306">
    <property type="entry name" value="SRP54"/>
    <property type="match status" value="1"/>
</dbReference>
<dbReference type="InterPro" id="IPR003593">
    <property type="entry name" value="AAA+_ATPase"/>
</dbReference>
<dbReference type="InterPro" id="IPR027417">
    <property type="entry name" value="P-loop_NTPase"/>
</dbReference>
<dbReference type="InterPro" id="IPR036891">
    <property type="entry name" value="Signal_recog_part_SRP54_M_sf"/>
</dbReference>
<dbReference type="InterPro" id="IPR013822">
    <property type="entry name" value="Signal_recog_particl_SRP54_hlx"/>
</dbReference>
<dbReference type="InterPro" id="IPR004125">
    <property type="entry name" value="Signal_recog_particle_SRP54_M"/>
</dbReference>
<dbReference type="InterPro" id="IPR036225">
    <property type="entry name" value="SRP/SRP_N"/>
</dbReference>
<dbReference type="InterPro" id="IPR022941">
    <property type="entry name" value="SRP54"/>
</dbReference>
<dbReference type="InterPro" id="IPR000897">
    <property type="entry name" value="SRP54_GTPase_dom"/>
</dbReference>
<dbReference type="InterPro" id="IPR042101">
    <property type="entry name" value="SRP54_N_sf"/>
</dbReference>
<dbReference type="PANTHER" id="PTHR11564">
    <property type="entry name" value="SIGNAL RECOGNITION PARTICLE 54K PROTEIN SRP54"/>
    <property type="match status" value="1"/>
</dbReference>
<dbReference type="PANTHER" id="PTHR11564:SF5">
    <property type="entry name" value="SIGNAL RECOGNITION PARTICLE SUBUNIT SRP54"/>
    <property type="match status" value="1"/>
</dbReference>
<dbReference type="Pfam" id="PF00448">
    <property type="entry name" value="SRP54"/>
    <property type="match status" value="1"/>
</dbReference>
<dbReference type="Pfam" id="PF02881">
    <property type="entry name" value="SRP54_N"/>
    <property type="match status" value="1"/>
</dbReference>
<dbReference type="Pfam" id="PF02978">
    <property type="entry name" value="SRP_SPB"/>
    <property type="match status" value="1"/>
</dbReference>
<dbReference type="SMART" id="SM00382">
    <property type="entry name" value="AAA"/>
    <property type="match status" value="1"/>
</dbReference>
<dbReference type="SMART" id="SM00962">
    <property type="entry name" value="SRP54"/>
    <property type="match status" value="1"/>
</dbReference>
<dbReference type="SMART" id="SM00963">
    <property type="entry name" value="SRP54_N"/>
    <property type="match status" value="1"/>
</dbReference>
<dbReference type="SUPFAM" id="SSF47364">
    <property type="entry name" value="Domain of the SRP/SRP receptor G-proteins"/>
    <property type="match status" value="1"/>
</dbReference>
<dbReference type="SUPFAM" id="SSF52540">
    <property type="entry name" value="P-loop containing nucleoside triphosphate hydrolases"/>
    <property type="match status" value="1"/>
</dbReference>
<dbReference type="SUPFAM" id="SSF47446">
    <property type="entry name" value="Signal peptide-binding domain"/>
    <property type="match status" value="1"/>
</dbReference>
<dbReference type="PROSITE" id="PS00300">
    <property type="entry name" value="SRP54"/>
    <property type="match status" value="1"/>
</dbReference>
<evidence type="ECO:0000255" key="1">
    <source>
        <dbReference type="HAMAP-Rule" id="MF_00306"/>
    </source>
</evidence>
<feature type="chain" id="PRO_0000322244" description="Signal recognition particle 54 kDa protein">
    <location>
        <begin position="1"/>
        <end position="446"/>
    </location>
</feature>
<feature type="binding site" evidence="1">
    <location>
        <begin position="103"/>
        <end position="110"/>
    </location>
    <ligand>
        <name>GTP</name>
        <dbReference type="ChEBI" id="CHEBI:37565"/>
    </ligand>
</feature>
<feature type="binding site" evidence="1">
    <location>
        <begin position="185"/>
        <end position="189"/>
    </location>
    <ligand>
        <name>GTP</name>
        <dbReference type="ChEBI" id="CHEBI:37565"/>
    </ligand>
</feature>
<feature type="binding site" evidence="1">
    <location>
        <begin position="245"/>
        <end position="248"/>
    </location>
    <ligand>
        <name>GTP</name>
        <dbReference type="ChEBI" id="CHEBI:37565"/>
    </ligand>
</feature>
<organism>
    <name type="scientific">Metallosphaera sedula (strain ATCC 51363 / DSM 5348 / JCM 9185 / NBRC 15509 / TH2)</name>
    <dbReference type="NCBI Taxonomy" id="399549"/>
    <lineage>
        <taxon>Archaea</taxon>
        <taxon>Thermoproteota</taxon>
        <taxon>Thermoprotei</taxon>
        <taxon>Sulfolobales</taxon>
        <taxon>Sulfolobaceae</taxon>
        <taxon>Metallosphaera</taxon>
    </lineage>
</organism>
<protein>
    <recommendedName>
        <fullName evidence="1">Signal recognition particle 54 kDa protein</fullName>
        <shortName evidence="1">SRP54</shortName>
        <ecNumber evidence="1">3.6.5.4</ecNumber>
    </recommendedName>
</protein>
<keyword id="KW-0963">Cytoplasm</keyword>
<keyword id="KW-0342">GTP-binding</keyword>
<keyword id="KW-0378">Hydrolase</keyword>
<keyword id="KW-0547">Nucleotide-binding</keyword>
<keyword id="KW-1185">Reference proteome</keyword>
<keyword id="KW-0687">Ribonucleoprotein</keyword>
<keyword id="KW-0694">RNA-binding</keyword>
<keyword id="KW-0733">Signal recognition particle</keyword>
<name>SRP54_METS5</name>
<comment type="function">
    <text evidence="1">Involved in targeting and insertion of nascent membrane proteins into the cytoplasmic membrane. Binds to the hydrophobic signal sequence of the ribosome-nascent chain (RNC) as it emerges from the ribosomes. The SRP-RNC complex is then targeted to the cytoplasmic membrane where it interacts with the SRP receptor FtsY.</text>
</comment>
<comment type="catalytic activity">
    <reaction evidence="1">
        <text>GTP + H2O = GDP + phosphate + H(+)</text>
        <dbReference type="Rhea" id="RHEA:19669"/>
        <dbReference type="ChEBI" id="CHEBI:15377"/>
        <dbReference type="ChEBI" id="CHEBI:15378"/>
        <dbReference type="ChEBI" id="CHEBI:37565"/>
        <dbReference type="ChEBI" id="CHEBI:43474"/>
        <dbReference type="ChEBI" id="CHEBI:58189"/>
        <dbReference type="EC" id="3.6.5.4"/>
    </reaction>
</comment>
<comment type="subunit">
    <text evidence="1">Part of the signal recognition particle protein translocation system, which is composed of SRP and FtsY. Archaeal SRP consists of a 7S RNA molecule of 300 nucleotides and two protein subunits: SRP54 and SRP19.</text>
</comment>
<comment type="subcellular location">
    <subcellularLocation>
        <location evidence="1">Cytoplasm</location>
    </subcellularLocation>
    <text evidence="1">The SRP-RNC complex is targeted to the cytoplasmic membrane.</text>
</comment>
<comment type="domain">
    <text evidence="1">Composed of three domains: the N-terminal N domain, which is responsible for interactions with the ribosome, the central G domain, which binds GTP, and the C-terminal M domain, which binds the RNA and the signal sequence of the RNC.</text>
</comment>
<comment type="similarity">
    <text evidence="1">Belongs to the GTP-binding SRP family. SRP54 subfamily.</text>
</comment>
<gene>
    <name evidence="1" type="primary">srp54</name>
    <name type="ordered locus">Msed_1757</name>
</gene>
<proteinExistence type="inferred from homology"/>
<accession>A4YHL0</accession>
<reference key="1">
    <citation type="journal article" date="2008" name="Appl. Environ. Microbiol.">
        <title>The genome sequence of the metal-mobilizing, extremely thermoacidophilic archaeon Metallosphaera sedula provides insights into bioleaching-associated metabolism.</title>
        <authorList>
            <person name="Auernik K.S."/>
            <person name="Maezato Y."/>
            <person name="Blum P.H."/>
            <person name="Kelly R.M."/>
        </authorList>
    </citation>
    <scope>NUCLEOTIDE SEQUENCE [LARGE SCALE GENOMIC DNA]</scope>
    <source>
        <strain>ATCC 51363 / DSM 5348 / JCM 9185 / NBRC 15509 / TH2</strain>
    </source>
</reference>
<sequence length="446" mass="49988">MLDGIRDAVRKFLGGNTSYEVAVEEFIKDIQKALISSDVQVKLVFSLTNKIKERLKKETPPSNLERREWFIKIVYDELSALFGGDKEPEVNPKSIPWVIMLVGVQGTGKTTTAGKLAYFYKKRGYKVALVGADVYRPAALEQLQQIGKQINVPVYGEPGSQDAVGIAKRGVEKFLSERYELVIVDTAGRHGYGEEVKLLEEMKDIYEKIKPNEVILVIDASLGQKAYDLAKRFHEASNVGSIIITKMDGTAKGGGALSAVAATGAPIKFIGVGEKIDELEVFNPRRFVARILGMGDLEAIIEKMKAMEDYEGIQKKMGEVMTGKSKLTLRDMYKQIVAVRKMGPLSKILQLIPGMNMMGDIPEDQVKVGEQKMQRWLSIMNSMTYQELDNPSIIDKQRMRRIAMGSGTEVEEVRELIEHFNTVQRTLKMLKRRKKDVEKLFGQMGG</sequence>